<organism>
    <name type="scientific">Streptococcus equi subsp. zooepidemicus (strain MGCS10565)</name>
    <dbReference type="NCBI Taxonomy" id="552526"/>
    <lineage>
        <taxon>Bacteria</taxon>
        <taxon>Bacillati</taxon>
        <taxon>Bacillota</taxon>
        <taxon>Bacilli</taxon>
        <taxon>Lactobacillales</taxon>
        <taxon>Streptococcaceae</taxon>
        <taxon>Streptococcus</taxon>
    </lineage>
</organism>
<keyword id="KW-0066">ATP synthesis</keyword>
<keyword id="KW-1003">Cell membrane</keyword>
<keyword id="KW-0138">CF(0)</keyword>
<keyword id="KW-0375">Hydrogen ion transport</keyword>
<keyword id="KW-0406">Ion transport</keyword>
<keyword id="KW-0472">Membrane</keyword>
<keyword id="KW-0812">Transmembrane</keyword>
<keyword id="KW-1133">Transmembrane helix</keyword>
<keyword id="KW-0813">Transport</keyword>
<sequence>MSVTIGELIGNFILVTGSVIVLLLLIKAFAWGAIEAVLQARSQQISQDIDQAEQARLNAQQLEKEGQANLEASRSEASQIVEAAKETGKAQETRIVAEATEEADRLKAVALTDIEHSKSEAISAVKTEMSDLTVLLAEKIMGANLDKAAQSQLIDRYLDDLGEA</sequence>
<reference key="1">
    <citation type="journal article" date="2008" name="PLoS ONE">
        <title>Genome sequence of a lancefield group C Streptococcus zooepidemicus strain causing epidemic nephritis: new information about an old disease.</title>
        <authorList>
            <person name="Beres S.B."/>
            <person name="Sesso R."/>
            <person name="Pinto S.W.L."/>
            <person name="Hoe N.P."/>
            <person name="Porcella S.F."/>
            <person name="Deleo F.R."/>
            <person name="Musser J.M."/>
        </authorList>
    </citation>
    <scope>NUCLEOTIDE SEQUENCE [LARGE SCALE GENOMIC DNA]</scope>
    <source>
        <strain>MGCS10565</strain>
    </source>
</reference>
<feature type="chain" id="PRO_0000368795" description="ATP synthase subunit b">
    <location>
        <begin position="1"/>
        <end position="164"/>
    </location>
</feature>
<feature type="transmembrane region" description="Helical" evidence="1">
    <location>
        <begin position="12"/>
        <end position="32"/>
    </location>
</feature>
<accession>B4U2D7</accession>
<evidence type="ECO:0000255" key="1">
    <source>
        <dbReference type="HAMAP-Rule" id="MF_01398"/>
    </source>
</evidence>
<gene>
    <name evidence="1" type="primary">atpF</name>
    <name type="ordered locus">Sez_0794</name>
</gene>
<dbReference type="EMBL" id="CP001129">
    <property type="protein sequence ID" value="ACG62154.1"/>
    <property type="molecule type" value="Genomic_DNA"/>
</dbReference>
<dbReference type="RefSeq" id="WP_012515428.1">
    <property type="nucleotide sequence ID" value="NC_011134.1"/>
</dbReference>
<dbReference type="SMR" id="B4U2D7"/>
<dbReference type="KEGG" id="sez:Sez_0794"/>
<dbReference type="HOGENOM" id="CLU_079215_4_2_9"/>
<dbReference type="Proteomes" id="UP000001873">
    <property type="component" value="Chromosome"/>
</dbReference>
<dbReference type="GO" id="GO:0005886">
    <property type="term" value="C:plasma membrane"/>
    <property type="evidence" value="ECO:0007669"/>
    <property type="project" value="UniProtKB-SubCell"/>
</dbReference>
<dbReference type="GO" id="GO:0045259">
    <property type="term" value="C:proton-transporting ATP synthase complex"/>
    <property type="evidence" value="ECO:0007669"/>
    <property type="project" value="UniProtKB-KW"/>
</dbReference>
<dbReference type="GO" id="GO:0046933">
    <property type="term" value="F:proton-transporting ATP synthase activity, rotational mechanism"/>
    <property type="evidence" value="ECO:0007669"/>
    <property type="project" value="UniProtKB-UniRule"/>
</dbReference>
<dbReference type="GO" id="GO:0046961">
    <property type="term" value="F:proton-transporting ATPase activity, rotational mechanism"/>
    <property type="evidence" value="ECO:0007669"/>
    <property type="project" value="TreeGrafter"/>
</dbReference>
<dbReference type="CDD" id="cd06503">
    <property type="entry name" value="ATP-synt_Fo_b"/>
    <property type="match status" value="1"/>
</dbReference>
<dbReference type="HAMAP" id="MF_01398">
    <property type="entry name" value="ATP_synth_b_bprime"/>
    <property type="match status" value="1"/>
</dbReference>
<dbReference type="InterPro" id="IPR028987">
    <property type="entry name" value="ATP_synth_B-like_membr_sf"/>
</dbReference>
<dbReference type="InterPro" id="IPR002146">
    <property type="entry name" value="ATP_synth_b/b'su_bac/chlpt"/>
</dbReference>
<dbReference type="InterPro" id="IPR005864">
    <property type="entry name" value="ATP_synth_F0_bsu_bac"/>
</dbReference>
<dbReference type="InterPro" id="IPR050059">
    <property type="entry name" value="ATP_synthase_B_chain"/>
</dbReference>
<dbReference type="NCBIfam" id="TIGR01144">
    <property type="entry name" value="ATP_synt_b"/>
    <property type="match status" value="1"/>
</dbReference>
<dbReference type="PANTHER" id="PTHR33445:SF1">
    <property type="entry name" value="ATP SYNTHASE SUBUNIT B"/>
    <property type="match status" value="1"/>
</dbReference>
<dbReference type="PANTHER" id="PTHR33445">
    <property type="entry name" value="ATP SYNTHASE SUBUNIT B', CHLOROPLASTIC"/>
    <property type="match status" value="1"/>
</dbReference>
<dbReference type="Pfam" id="PF00430">
    <property type="entry name" value="ATP-synt_B"/>
    <property type="match status" value="1"/>
</dbReference>
<dbReference type="SUPFAM" id="SSF81573">
    <property type="entry name" value="F1F0 ATP synthase subunit B, membrane domain"/>
    <property type="match status" value="1"/>
</dbReference>
<proteinExistence type="inferred from homology"/>
<name>ATPF_STREM</name>
<protein>
    <recommendedName>
        <fullName evidence="1">ATP synthase subunit b</fullName>
    </recommendedName>
    <alternativeName>
        <fullName evidence="1">ATP synthase F(0) sector subunit b</fullName>
    </alternativeName>
    <alternativeName>
        <fullName evidence="1">ATPase subunit I</fullName>
    </alternativeName>
    <alternativeName>
        <fullName evidence="1">F-type ATPase subunit b</fullName>
        <shortName evidence="1">F-ATPase subunit b</shortName>
    </alternativeName>
</protein>
<comment type="function">
    <text evidence="1">F(1)F(0) ATP synthase produces ATP from ADP in the presence of a proton or sodium gradient. F-type ATPases consist of two structural domains, F(1) containing the extramembraneous catalytic core and F(0) containing the membrane proton channel, linked together by a central stalk and a peripheral stalk. During catalysis, ATP synthesis in the catalytic domain of F(1) is coupled via a rotary mechanism of the central stalk subunits to proton translocation.</text>
</comment>
<comment type="function">
    <text evidence="1">Component of the F(0) channel, it forms part of the peripheral stalk, linking F(1) to F(0).</text>
</comment>
<comment type="subunit">
    <text evidence="1">F-type ATPases have 2 components, F(1) - the catalytic core - and F(0) - the membrane proton channel. F(1) has five subunits: alpha(3), beta(3), gamma(1), delta(1), epsilon(1). F(0) has three main subunits: a(1), b(2) and c(10-14). The alpha and beta chains form an alternating ring which encloses part of the gamma chain. F(1) is attached to F(0) by a central stalk formed by the gamma and epsilon chains, while a peripheral stalk is formed by the delta and b chains.</text>
</comment>
<comment type="subcellular location">
    <subcellularLocation>
        <location evidence="1">Cell membrane</location>
        <topology evidence="1">Single-pass membrane protein</topology>
    </subcellularLocation>
</comment>
<comment type="similarity">
    <text evidence="1">Belongs to the ATPase B chain family.</text>
</comment>